<organism>
    <name type="scientific">Oltmannsiellopsis viridis</name>
    <name type="common">Marine flagellate</name>
    <name type="synonym">Oltmannsiella viridis</name>
    <dbReference type="NCBI Taxonomy" id="51324"/>
    <lineage>
        <taxon>Eukaryota</taxon>
        <taxon>Viridiplantae</taxon>
        <taxon>Chlorophyta</taxon>
        <taxon>Ulvophyceae</taxon>
        <taxon>Oltmannsiellopsidales</taxon>
        <taxon>Oltmannsiellopsidaceae</taxon>
        <taxon>Oltmannsiellopsis</taxon>
    </lineage>
</organism>
<dbReference type="EMBL" id="DQ291132">
    <property type="protein sequence ID" value="ABB81999.1"/>
    <property type="molecule type" value="Genomic_DNA"/>
</dbReference>
<dbReference type="RefSeq" id="YP_635838.1">
    <property type="nucleotide sequence ID" value="NC_008099.1"/>
</dbReference>
<dbReference type="SMR" id="Q20F07"/>
<dbReference type="GeneID" id="4100175"/>
<dbReference type="GO" id="GO:0009507">
    <property type="term" value="C:chloroplast"/>
    <property type="evidence" value="ECO:0007669"/>
    <property type="project" value="UniProtKB-SubCell"/>
</dbReference>
<dbReference type="GO" id="GO:1990904">
    <property type="term" value="C:ribonucleoprotein complex"/>
    <property type="evidence" value="ECO:0007669"/>
    <property type="project" value="UniProtKB-KW"/>
</dbReference>
<dbReference type="GO" id="GO:0005840">
    <property type="term" value="C:ribosome"/>
    <property type="evidence" value="ECO:0007669"/>
    <property type="project" value="UniProtKB-KW"/>
</dbReference>
<dbReference type="GO" id="GO:0019843">
    <property type="term" value="F:rRNA binding"/>
    <property type="evidence" value="ECO:0007669"/>
    <property type="project" value="UniProtKB-UniRule"/>
</dbReference>
<dbReference type="GO" id="GO:0003735">
    <property type="term" value="F:structural constituent of ribosome"/>
    <property type="evidence" value="ECO:0007669"/>
    <property type="project" value="InterPro"/>
</dbReference>
<dbReference type="GO" id="GO:0006412">
    <property type="term" value="P:translation"/>
    <property type="evidence" value="ECO:0007669"/>
    <property type="project" value="UniProtKB-UniRule"/>
</dbReference>
<dbReference type="FunFam" id="3.30.1440.10:FF:000001">
    <property type="entry name" value="50S ribosomal protein L5"/>
    <property type="match status" value="1"/>
</dbReference>
<dbReference type="Gene3D" id="3.30.1440.10">
    <property type="match status" value="1"/>
</dbReference>
<dbReference type="HAMAP" id="MF_01333_B">
    <property type="entry name" value="Ribosomal_uL5_B"/>
    <property type="match status" value="1"/>
</dbReference>
<dbReference type="InterPro" id="IPR002132">
    <property type="entry name" value="Ribosomal_uL5"/>
</dbReference>
<dbReference type="InterPro" id="IPR020930">
    <property type="entry name" value="Ribosomal_uL5_bac-type"/>
</dbReference>
<dbReference type="InterPro" id="IPR031309">
    <property type="entry name" value="Ribosomal_uL5_C"/>
</dbReference>
<dbReference type="InterPro" id="IPR020929">
    <property type="entry name" value="Ribosomal_uL5_CS"/>
</dbReference>
<dbReference type="InterPro" id="IPR022803">
    <property type="entry name" value="Ribosomal_uL5_dom_sf"/>
</dbReference>
<dbReference type="InterPro" id="IPR031310">
    <property type="entry name" value="Ribosomal_uL5_N"/>
</dbReference>
<dbReference type="NCBIfam" id="NF000585">
    <property type="entry name" value="PRK00010.1"/>
    <property type="match status" value="1"/>
</dbReference>
<dbReference type="PANTHER" id="PTHR11994">
    <property type="entry name" value="60S RIBOSOMAL PROTEIN L11-RELATED"/>
    <property type="match status" value="1"/>
</dbReference>
<dbReference type="Pfam" id="PF00281">
    <property type="entry name" value="Ribosomal_L5"/>
    <property type="match status" value="1"/>
</dbReference>
<dbReference type="Pfam" id="PF00673">
    <property type="entry name" value="Ribosomal_L5_C"/>
    <property type="match status" value="1"/>
</dbReference>
<dbReference type="PIRSF" id="PIRSF002161">
    <property type="entry name" value="Ribosomal_L5"/>
    <property type="match status" value="1"/>
</dbReference>
<dbReference type="SUPFAM" id="SSF55282">
    <property type="entry name" value="RL5-like"/>
    <property type="match status" value="1"/>
</dbReference>
<dbReference type="PROSITE" id="PS00358">
    <property type="entry name" value="RIBOSOMAL_L5"/>
    <property type="match status" value="1"/>
</dbReference>
<protein>
    <recommendedName>
        <fullName evidence="2">Large ribosomal subunit protein uL5c</fullName>
    </recommendedName>
    <alternativeName>
        <fullName>50S ribosomal protein L5, chloroplastic</fullName>
    </alternativeName>
</protein>
<comment type="function">
    <text evidence="1">Binds 5S rRNA, forms part of the central protuberance of the 50S subunit.</text>
</comment>
<comment type="subunit">
    <text evidence="1">Part of the 50S ribosomal subunit; contacts the 5S rRNA.</text>
</comment>
<comment type="subcellular location">
    <subcellularLocation>
        <location>Plastid</location>
        <location>Chloroplast</location>
    </subcellularLocation>
</comment>
<comment type="similarity">
    <text evidence="2">Belongs to the universal ribosomal protein uL5 family.</text>
</comment>
<reference key="1">
    <citation type="journal article" date="2006" name="BMC Biol.">
        <title>The complete chloroplast DNA sequence of the green alga Oltmannsiellopsis viridis reveals a distinctive quadripartite architecture in the chloroplast genome of early diverging ulvophytes.</title>
        <authorList>
            <person name="Pombert J.-F."/>
            <person name="Lemieux C."/>
            <person name="Turmel M."/>
        </authorList>
    </citation>
    <scope>NUCLEOTIDE SEQUENCE [LARGE SCALE GENOMIC DNA]</scope>
</reference>
<feature type="chain" id="PRO_0000243093" description="Large ribosomal subunit protein uL5c">
    <location>
        <begin position="1"/>
        <end position="180"/>
    </location>
</feature>
<sequence length="180" mass="20150">MAQRFKELYLQTIVPKLKDEFGYKNSHQVPEIKKIVINRGLGDASQNAKILDSSLNELSIIAGQRGVVTRSKKAIAGFKLRDKMAVGISVTLRGDRMYSFLDRLINLALPRIRDFQGISPKSFDGCGNYSLGLEEQLMFPEIDYDKIDQVRGMDISIVTTCSNNEEGVALLKNFGMPFKA</sequence>
<accession>Q20F07</accession>
<keyword id="KW-0150">Chloroplast</keyword>
<keyword id="KW-0934">Plastid</keyword>
<keyword id="KW-0687">Ribonucleoprotein</keyword>
<keyword id="KW-0689">Ribosomal protein</keyword>
<keyword id="KW-0694">RNA-binding</keyword>
<keyword id="KW-0699">rRNA-binding</keyword>
<evidence type="ECO:0000250" key="1"/>
<evidence type="ECO:0000305" key="2"/>
<name>RK5_OLTVI</name>
<gene>
    <name type="primary">rpl5</name>
</gene>
<proteinExistence type="inferred from homology"/>
<geneLocation type="chloroplast"/>